<feature type="chain" id="PRO_0000184997" description="5-oxoprolinase subunit A">
    <location>
        <begin position="1"/>
        <end position="254"/>
    </location>
</feature>
<proteinExistence type="inferred from homology"/>
<comment type="function">
    <text evidence="1">Catalyzes the cleavage of 5-oxoproline to form L-glutamate coupled to the hydrolysis of ATP to ADP and inorganic phosphate.</text>
</comment>
<comment type="catalytic activity">
    <reaction evidence="1">
        <text>5-oxo-L-proline + ATP + 2 H2O = L-glutamate + ADP + phosphate + H(+)</text>
        <dbReference type="Rhea" id="RHEA:10348"/>
        <dbReference type="ChEBI" id="CHEBI:15377"/>
        <dbReference type="ChEBI" id="CHEBI:15378"/>
        <dbReference type="ChEBI" id="CHEBI:29985"/>
        <dbReference type="ChEBI" id="CHEBI:30616"/>
        <dbReference type="ChEBI" id="CHEBI:43474"/>
        <dbReference type="ChEBI" id="CHEBI:58402"/>
        <dbReference type="ChEBI" id="CHEBI:456216"/>
        <dbReference type="EC" id="3.5.2.9"/>
    </reaction>
</comment>
<comment type="subunit">
    <text evidence="1">Forms a complex composed of PxpA, PxpB and PxpC.</text>
</comment>
<comment type="similarity">
    <text evidence="1">Belongs to the LamB/PxpA family.</text>
</comment>
<sequence>MEIDLNADLGEGCGSDEALLDLVTSANIACGWHAGGAQAMRDCVRWAVEKGVSIGAHPSFHDPENFGRKEMDLPASEIYAGVLYQLGALSAIAQAEGGRIAHVKPHGALYNQAAREPEIADAVVSAIHDFDPSLAVFGLAKSGFVDAAQQAGLVAVEEVFADRGYRADGSLVPRSQPGALVDDENEMLARTLEMVRGQRVRAVTGEWVPLNAQTVCLHGDGPHALAFAKRIRDALEAAGIDVHAPGALHAGERA</sequence>
<accession>Q62EU9</accession>
<name>PXPA_BURMA</name>
<organism>
    <name type="scientific">Burkholderia mallei (strain ATCC 23344)</name>
    <dbReference type="NCBI Taxonomy" id="243160"/>
    <lineage>
        <taxon>Bacteria</taxon>
        <taxon>Pseudomonadati</taxon>
        <taxon>Pseudomonadota</taxon>
        <taxon>Betaproteobacteria</taxon>
        <taxon>Burkholderiales</taxon>
        <taxon>Burkholderiaceae</taxon>
        <taxon>Burkholderia</taxon>
        <taxon>pseudomallei group</taxon>
    </lineage>
</organism>
<gene>
    <name evidence="1" type="primary">pxpA</name>
    <name type="ordered locus">BMA3309</name>
</gene>
<reference key="1">
    <citation type="journal article" date="2004" name="Proc. Natl. Acad. Sci. U.S.A.">
        <title>Structural flexibility in the Burkholderia mallei genome.</title>
        <authorList>
            <person name="Nierman W.C."/>
            <person name="DeShazer D."/>
            <person name="Kim H.S."/>
            <person name="Tettelin H."/>
            <person name="Nelson K.E."/>
            <person name="Feldblyum T.V."/>
            <person name="Ulrich R.L."/>
            <person name="Ronning C.M."/>
            <person name="Brinkac L.M."/>
            <person name="Daugherty S.C."/>
            <person name="Davidsen T.D."/>
            <person name="DeBoy R.T."/>
            <person name="Dimitrov G."/>
            <person name="Dodson R.J."/>
            <person name="Durkin A.S."/>
            <person name="Gwinn M.L."/>
            <person name="Haft D.H."/>
            <person name="Khouri H.M."/>
            <person name="Kolonay J.F."/>
            <person name="Madupu R."/>
            <person name="Mohammoud Y."/>
            <person name="Nelson W.C."/>
            <person name="Radune D."/>
            <person name="Romero C.M."/>
            <person name="Sarria S."/>
            <person name="Selengut J."/>
            <person name="Shamblin C."/>
            <person name="Sullivan S.A."/>
            <person name="White O."/>
            <person name="Yu Y."/>
            <person name="Zafar N."/>
            <person name="Zhou L."/>
            <person name="Fraser C.M."/>
        </authorList>
    </citation>
    <scope>NUCLEOTIDE SEQUENCE [LARGE SCALE GENOMIC DNA]</scope>
    <source>
        <strain>ATCC 23344</strain>
    </source>
</reference>
<protein>
    <recommendedName>
        <fullName evidence="1">5-oxoprolinase subunit A</fullName>
        <shortName evidence="1">5-OPase subunit A</shortName>
        <ecNumber evidence="1">3.5.2.9</ecNumber>
    </recommendedName>
    <alternativeName>
        <fullName evidence="1">5-oxoprolinase (ATP-hydrolyzing) subunit A</fullName>
    </alternativeName>
</protein>
<evidence type="ECO:0000255" key="1">
    <source>
        <dbReference type="HAMAP-Rule" id="MF_00691"/>
    </source>
</evidence>
<dbReference type="EC" id="3.5.2.9" evidence="1"/>
<dbReference type="EMBL" id="CP000010">
    <property type="protein sequence ID" value="AAU48564.1"/>
    <property type="molecule type" value="Genomic_DNA"/>
</dbReference>
<dbReference type="RefSeq" id="WP_004197223.1">
    <property type="nucleotide sequence ID" value="NC_006348.1"/>
</dbReference>
<dbReference type="RefSeq" id="YP_104779.1">
    <property type="nucleotide sequence ID" value="NC_006348.1"/>
</dbReference>
<dbReference type="SMR" id="Q62EU9"/>
<dbReference type="GeneID" id="92980979"/>
<dbReference type="KEGG" id="bma:BMA3309"/>
<dbReference type="PATRIC" id="fig|243160.12.peg.3396"/>
<dbReference type="eggNOG" id="COG1540">
    <property type="taxonomic scope" value="Bacteria"/>
</dbReference>
<dbReference type="HOGENOM" id="CLU_069535_0_0_4"/>
<dbReference type="Proteomes" id="UP000006693">
    <property type="component" value="Chromosome 1"/>
</dbReference>
<dbReference type="GO" id="GO:0017168">
    <property type="term" value="F:5-oxoprolinase (ATP-hydrolyzing) activity"/>
    <property type="evidence" value="ECO:0007669"/>
    <property type="project" value="UniProtKB-UniRule"/>
</dbReference>
<dbReference type="GO" id="GO:0005524">
    <property type="term" value="F:ATP binding"/>
    <property type="evidence" value="ECO:0007669"/>
    <property type="project" value="UniProtKB-UniRule"/>
</dbReference>
<dbReference type="GO" id="GO:0005975">
    <property type="term" value="P:carbohydrate metabolic process"/>
    <property type="evidence" value="ECO:0007669"/>
    <property type="project" value="InterPro"/>
</dbReference>
<dbReference type="CDD" id="cd10800">
    <property type="entry name" value="LamB_YcsF_YbgL_like"/>
    <property type="match status" value="1"/>
</dbReference>
<dbReference type="Gene3D" id="3.20.20.370">
    <property type="entry name" value="Glycoside hydrolase/deacetylase"/>
    <property type="match status" value="1"/>
</dbReference>
<dbReference type="HAMAP" id="MF_00691">
    <property type="entry name" value="PxpA"/>
    <property type="match status" value="1"/>
</dbReference>
<dbReference type="InterPro" id="IPR011330">
    <property type="entry name" value="Glyco_hydro/deAcase_b/a-brl"/>
</dbReference>
<dbReference type="InterPro" id="IPR005501">
    <property type="entry name" value="LamB/YcsF/PxpA-like"/>
</dbReference>
<dbReference type="NCBIfam" id="NF003812">
    <property type="entry name" value="PRK05406.1-1"/>
    <property type="match status" value="1"/>
</dbReference>
<dbReference type="NCBIfam" id="NF003814">
    <property type="entry name" value="PRK05406.1-3"/>
    <property type="match status" value="1"/>
</dbReference>
<dbReference type="NCBIfam" id="NF003815">
    <property type="entry name" value="PRK05406.1-4"/>
    <property type="match status" value="1"/>
</dbReference>
<dbReference type="NCBIfam" id="NF003816">
    <property type="entry name" value="PRK05406.1-5"/>
    <property type="match status" value="1"/>
</dbReference>
<dbReference type="PANTHER" id="PTHR30292:SF0">
    <property type="entry name" value="5-OXOPROLINASE SUBUNIT A"/>
    <property type="match status" value="1"/>
</dbReference>
<dbReference type="PANTHER" id="PTHR30292">
    <property type="entry name" value="UNCHARACTERIZED PROTEIN YBGL-RELATED"/>
    <property type="match status" value="1"/>
</dbReference>
<dbReference type="Pfam" id="PF03746">
    <property type="entry name" value="LamB_YcsF"/>
    <property type="match status" value="1"/>
</dbReference>
<dbReference type="SUPFAM" id="SSF88713">
    <property type="entry name" value="Glycoside hydrolase/deacetylase"/>
    <property type="match status" value="1"/>
</dbReference>
<keyword id="KW-0067">ATP-binding</keyword>
<keyword id="KW-0378">Hydrolase</keyword>
<keyword id="KW-0547">Nucleotide-binding</keyword>
<keyword id="KW-1185">Reference proteome</keyword>